<name>HA13_MOUSE</name>
<keyword id="KW-1015">Disulfide bond</keyword>
<keyword id="KW-0325">Glycoprotein</keyword>
<keyword id="KW-0379">Hydroxylation</keyword>
<keyword id="KW-0391">Immunity</keyword>
<keyword id="KW-0472">Membrane</keyword>
<keyword id="KW-0490">MHC I</keyword>
<keyword id="KW-0597">Phosphoprotein</keyword>
<keyword id="KW-1185">Reference proteome</keyword>
<keyword id="KW-0732">Signal</keyword>
<keyword id="KW-0812">Transmembrane</keyword>
<keyword id="KW-1133">Transmembrane helix</keyword>
<keyword id="KW-0832">Ubl conjugation</keyword>
<accession>P14426</accession>
<dbReference type="EMBL" id="M18524">
    <property type="protein sequence ID" value="AAA53201.1"/>
    <property type="molecule type" value="Genomic_DNA"/>
</dbReference>
<dbReference type="PIR" id="I71998">
    <property type="entry name" value="I71998"/>
</dbReference>
<dbReference type="SMR" id="P14426"/>
<dbReference type="GlyConnect" id="2365">
    <property type="glycosylation" value="1 N-Linked glycan (1 site)"/>
</dbReference>
<dbReference type="GlyCosmos" id="P14426">
    <property type="glycosylation" value="3 sites, 1 glycan"/>
</dbReference>
<dbReference type="iPTMnet" id="P14426"/>
<dbReference type="PhosphoSitePlus" id="P14426"/>
<dbReference type="SwissPalm" id="P14426"/>
<dbReference type="jPOST" id="P14426"/>
<dbReference type="PeptideAtlas" id="P14426"/>
<dbReference type="ProteomicsDB" id="269672"/>
<dbReference type="MGI" id="MGI:95896">
    <property type="gene designation" value="H2-D1"/>
</dbReference>
<dbReference type="ChiTaRS" id="H2-D1">
    <property type="organism name" value="mouse"/>
</dbReference>
<dbReference type="Proteomes" id="UP000000589">
    <property type="component" value="Unplaced"/>
</dbReference>
<dbReference type="GO" id="GO:0009897">
    <property type="term" value="C:external side of plasma membrane"/>
    <property type="evidence" value="ECO:0000314"/>
    <property type="project" value="MGI"/>
</dbReference>
<dbReference type="GO" id="GO:0098553">
    <property type="term" value="C:lumenal side of endoplasmic reticulum membrane"/>
    <property type="evidence" value="ECO:0000304"/>
    <property type="project" value="Reactome"/>
</dbReference>
<dbReference type="GO" id="GO:0042612">
    <property type="term" value="C:MHC class I protein complex"/>
    <property type="evidence" value="ECO:0007669"/>
    <property type="project" value="UniProtKB-KW"/>
</dbReference>
<dbReference type="GO" id="GO:0030670">
    <property type="term" value="C:phagocytic vesicle membrane"/>
    <property type="evidence" value="ECO:0000304"/>
    <property type="project" value="Reactome"/>
</dbReference>
<dbReference type="GO" id="GO:0005886">
    <property type="term" value="C:plasma membrane"/>
    <property type="evidence" value="ECO:0000314"/>
    <property type="project" value="MGI"/>
</dbReference>
<dbReference type="GO" id="GO:0002485">
    <property type="term" value="P:antigen processing and presentation of endogenous peptide antigen via MHC class I via ER pathway, TAP-dependent"/>
    <property type="evidence" value="ECO:0000314"/>
    <property type="project" value="MGI"/>
</dbReference>
<dbReference type="GO" id="GO:0010977">
    <property type="term" value="P:negative regulation of neuron projection development"/>
    <property type="evidence" value="ECO:0000314"/>
    <property type="project" value="MGI"/>
</dbReference>
<dbReference type="GO" id="GO:0001916">
    <property type="term" value="P:positive regulation of T cell mediated cytotoxicity"/>
    <property type="evidence" value="ECO:0000314"/>
    <property type="project" value="MGI"/>
</dbReference>
<dbReference type="GO" id="GO:0001913">
    <property type="term" value="P:T cell mediated cytotoxicity"/>
    <property type="evidence" value="ECO:0000314"/>
    <property type="project" value="MGI"/>
</dbReference>
<dbReference type="FunFam" id="2.60.40.10:FF:000014">
    <property type="entry name" value="H-2 class I histocompatibility antigen, alpha chain"/>
    <property type="match status" value="1"/>
</dbReference>
<dbReference type="FunFam" id="3.30.500.10:FF:000001">
    <property type="entry name" value="H-2 class I histocompatibility antigen, alpha chain"/>
    <property type="match status" value="1"/>
</dbReference>
<dbReference type="Gene3D" id="2.60.40.10">
    <property type="entry name" value="Immunoglobulins"/>
    <property type="match status" value="1"/>
</dbReference>
<dbReference type="Gene3D" id="3.30.500.10">
    <property type="entry name" value="MHC class I-like antigen recognition-like"/>
    <property type="match status" value="1"/>
</dbReference>
<dbReference type="InterPro" id="IPR007110">
    <property type="entry name" value="Ig-like_dom"/>
</dbReference>
<dbReference type="InterPro" id="IPR036179">
    <property type="entry name" value="Ig-like_dom_sf"/>
</dbReference>
<dbReference type="InterPro" id="IPR013783">
    <property type="entry name" value="Ig-like_fold"/>
</dbReference>
<dbReference type="InterPro" id="IPR003006">
    <property type="entry name" value="Ig/MHC_CS"/>
</dbReference>
<dbReference type="InterPro" id="IPR003597">
    <property type="entry name" value="Ig_C1-set"/>
</dbReference>
<dbReference type="InterPro" id="IPR050208">
    <property type="entry name" value="MHC_class-I_related"/>
</dbReference>
<dbReference type="InterPro" id="IPR011161">
    <property type="entry name" value="MHC_I-like_Ag-recog"/>
</dbReference>
<dbReference type="InterPro" id="IPR037055">
    <property type="entry name" value="MHC_I-like_Ag-recog_sf"/>
</dbReference>
<dbReference type="InterPro" id="IPR011162">
    <property type="entry name" value="MHC_I/II-like_Ag-recog"/>
</dbReference>
<dbReference type="InterPro" id="IPR001039">
    <property type="entry name" value="MHC_I_a_a1/a2"/>
</dbReference>
<dbReference type="PANTHER" id="PTHR16675:SF251">
    <property type="entry name" value="HLA CLASS I HISTOCOMPATIBILITY ANTIGEN, C ALPHA CHAIN"/>
    <property type="match status" value="1"/>
</dbReference>
<dbReference type="PANTHER" id="PTHR16675">
    <property type="entry name" value="MHC CLASS I-RELATED"/>
    <property type="match status" value="1"/>
</dbReference>
<dbReference type="Pfam" id="PF07654">
    <property type="entry name" value="C1-set"/>
    <property type="match status" value="1"/>
</dbReference>
<dbReference type="Pfam" id="PF00129">
    <property type="entry name" value="MHC_I"/>
    <property type="match status" value="1"/>
</dbReference>
<dbReference type="PRINTS" id="PR01638">
    <property type="entry name" value="MHCCLASSI"/>
</dbReference>
<dbReference type="SMART" id="SM00407">
    <property type="entry name" value="IGc1"/>
    <property type="match status" value="1"/>
</dbReference>
<dbReference type="SUPFAM" id="SSF48726">
    <property type="entry name" value="Immunoglobulin"/>
    <property type="match status" value="1"/>
</dbReference>
<dbReference type="SUPFAM" id="SSF54452">
    <property type="entry name" value="MHC antigen-recognition domain"/>
    <property type="match status" value="1"/>
</dbReference>
<dbReference type="PROSITE" id="PS50835">
    <property type="entry name" value="IG_LIKE"/>
    <property type="match status" value="1"/>
</dbReference>
<dbReference type="PROSITE" id="PS00290">
    <property type="entry name" value="IG_MHC"/>
    <property type="match status" value="1"/>
</dbReference>
<comment type="function">
    <text>Involved in the presentation of foreign antigens to the immune system.</text>
</comment>
<comment type="subunit">
    <text>Heterodimer of an alpha chain and a beta chain (beta-2-microglobulin).</text>
</comment>
<comment type="subcellular location">
    <subcellularLocation>
        <location>Membrane</location>
        <topology>Single-pass type I membrane protein</topology>
    </subcellularLocation>
</comment>
<comment type="PTM">
    <text evidence="8">Polyubiquitinated in case of infection by murid herpesvirus 4, by the viral E3 ligase K3 (mK3), leading to target the protein for rapid degradation by the endoplasmic reticulum-associated degradation (ERAD) system. Ubiquitination takes place on lysine, as well as serine and threonine residues present in the cytoplasmic tail. Hydroxylated serine and threonine residues in the cytoplasmic tail are subject to ubiquitination via ester bonds instead of the classical isopeptide linkage (Probable).</text>
</comment>
<comment type="PTM">
    <text evidence="1">Hydroxylation of residues in the cytoplasmic tail.</text>
</comment>
<comment type="similarity">
    <text evidence="7">Belongs to the MHC class I family.</text>
</comment>
<feature type="signal peptide" evidence="1">
    <location>
        <begin position="1"/>
        <end position="24"/>
    </location>
</feature>
<feature type="chain" id="PRO_0000018925" description="H-2 class I histocompatibility antigen, D-K alpha chain">
    <location>
        <begin position="25"/>
        <end position="362"/>
    </location>
</feature>
<feature type="topological domain" description="Extracellular" evidence="3">
    <location>
        <begin position="25"/>
        <end position="306"/>
    </location>
</feature>
<feature type="transmembrane region" description="Helical" evidence="3">
    <location>
        <begin position="307"/>
        <end position="333"/>
    </location>
</feature>
<feature type="topological domain" description="Cytoplasmic" evidence="3">
    <location>
        <begin position="334"/>
        <end position="362"/>
    </location>
</feature>
<feature type="domain" description="Ig-like C1-type">
    <location>
        <begin position="209"/>
        <end position="297"/>
    </location>
</feature>
<feature type="region of interest" description="Alpha-1">
    <location>
        <begin position="25"/>
        <end position="114"/>
    </location>
</feature>
<feature type="region of interest" description="Alpha-2">
    <location>
        <begin position="115"/>
        <end position="206"/>
    </location>
</feature>
<feature type="region of interest" description="Alpha-3">
    <location>
        <begin position="207"/>
        <end position="298"/>
    </location>
</feature>
<feature type="region of interest" description="Connecting peptide">
    <location>
        <begin position="299"/>
        <end position="306"/>
    </location>
</feature>
<feature type="region of interest" description="Disordered" evidence="5">
    <location>
        <begin position="340"/>
        <end position="362"/>
    </location>
</feature>
<feature type="modified residue" description="Phosphoserine" evidence="2">
    <location>
        <position position="353"/>
    </location>
</feature>
<feature type="modified residue" description="Phosphoserine" evidence="2">
    <location>
        <position position="356"/>
    </location>
</feature>
<feature type="glycosylation site" description="N-linked (GlcNAc...) asparagine" evidence="6">
    <location>
        <position position="110"/>
    </location>
</feature>
<feature type="glycosylation site" description="N-linked (GlcNAc...) asparagine" evidence="6">
    <location>
        <position position="200"/>
    </location>
</feature>
<feature type="glycosylation site" description="N-linked (GlcNAc...) asparagine" evidence="3">
    <location>
        <position position="280"/>
    </location>
</feature>
<feature type="disulfide bond" evidence="4">
    <location>
        <begin position="125"/>
        <end position="188"/>
    </location>
</feature>
<feature type="disulfide bond" evidence="4">
    <location>
        <begin position="227"/>
        <end position="283"/>
    </location>
</feature>
<sequence>MGAMVPRTLLLLLAAALAPAQTRAGPHSLRYFETVVSRPGLGEPRFISVGYVDNTEFVRFDSDAENPRDEPRVRWMEQEGPEYWERETQIAKGNEQSFRVDLRTLLRYYNQSEGGSHTIQRLSGCDVGSDWRLLRGYEQFAYDGCDYIALNEDLKTWTAADMAALITKHKWEQAGAAERDRAYLEGTCVEWLRRYLELGNATLLHTDSPKAHVTHHPRSKVEVTLRCWALGFYPADITLTWQLNGEELTQDMELVETRPAGDGTFQKWASVVVPLGKEQNYTCHVYHEGLPEPLTLRWEPPPSTDSYMVIVAVLGVLGAVAIIGAVVAFVMMMRRNTGGKGGDYTLTPGSQSSEMSLPDCKA</sequence>
<evidence type="ECO:0000250" key="1"/>
<evidence type="ECO:0000250" key="2">
    <source>
        <dbReference type="UniProtKB" id="P01900"/>
    </source>
</evidence>
<evidence type="ECO:0000255" key="3"/>
<evidence type="ECO:0000255" key="4">
    <source>
        <dbReference type="PROSITE-ProRule" id="PRU00114"/>
    </source>
</evidence>
<evidence type="ECO:0000256" key="5">
    <source>
        <dbReference type="SAM" id="MobiDB-lite"/>
    </source>
</evidence>
<evidence type="ECO:0000269" key="6">
    <source>
    </source>
</evidence>
<evidence type="ECO:0000305" key="7"/>
<evidence type="ECO:0000305" key="8">
    <source>
    </source>
</evidence>
<protein>
    <recommendedName>
        <fullName>H-2 class I histocompatibility antigen, D-K alpha chain</fullName>
        <shortName>H-2D(K)</shortName>
    </recommendedName>
</protein>
<organism>
    <name type="scientific">Mus musculus</name>
    <name type="common">Mouse</name>
    <dbReference type="NCBI Taxonomy" id="10090"/>
    <lineage>
        <taxon>Eukaryota</taxon>
        <taxon>Metazoa</taxon>
        <taxon>Chordata</taxon>
        <taxon>Craniata</taxon>
        <taxon>Vertebrata</taxon>
        <taxon>Euteleostomi</taxon>
        <taxon>Mammalia</taxon>
        <taxon>Eutheria</taxon>
        <taxon>Euarchontoglires</taxon>
        <taxon>Glires</taxon>
        <taxon>Rodentia</taxon>
        <taxon>Myomorpha</taxon>
        <taxon>Muroidea</taxon>
        <taxon>Muridae</taxon>
        <taxon>Murinae</taxon>
        <taxon>Mus</taxon>
        <taxon>Mus</taxon>
    </lineage>
</organism>
<reference key="1">
    <citation type="journal article" date="1987" name="J. Immunol.">
        <title>DNA sequence analysis of the C3H H-2Kk and H-2Dk loci. Evolutionary relationships to H-2 genes from four other mouse strains.</title>
        <authorList>
            <person name="Watts S."/>
            <person name="Vogel J.M."/>
            <person name="Harriman W.D."/>
            <person name="Itoh T."/>
            <person name="Stauss H.J."/>
            <person name="Goodenow R.S."/>
        </authorList>
    </citation>
    <scope>NUCLEOTIDE SEQUENCE [GENOMIC DNA]</scope>
    <source>
        <strain>C3H/HeJ</strain>
    </source>
</reference>
<reference key="2">
    <citation type="journal article" date="2001" name="Immunity">
        <title>MHC class I ubiquitination by a viral PHD/LAP finger protein.</title>
        <authorList>
            <person name="Boname J.M."/>
            <person name="Stevenson P.G."/>
        </authorList>
    </citation>
    <scope>UBIQUITINATION</scope>
</reference>
<reference key="3">
    <citation type="journal article" date="2009" name="Mol. Cell. Proteomics">
        <title>The mouse C2C12 myoblast cell surface N-linked glycoproteome: identification, glycosite occupancy, and membrane orientation.</title>
        <authorList>
            <person name="Gundry R.L."/>
            <person name="Raginski K."/>
            <person name="Tarasova Y."/>
            <person name="Tchernyshyov I."/>
            <person name="Bausch-Fluck D."/>
            <person name="Elliott S.T."/>
            <person name="Boheler K.R."/>
            <person name="Van Eyk J.E."/>
            <person name="Wollscheid B."/>
        </authorList>
    </citation>
    <scope>GLYCOSYLATION [LARGE SCALE ANALYSIS] AT ASN-110 AND ASN-200</scope>
    <source>
        <tissue>Myoblast</tissue>
    </source>
</reference>
<gene>
    <name type="primary">H2-D1</name>
</gene>
<proteinExistence type="evidence at protein level"/>